<comment type="function">
    <text evidence="1 6">Transcriptional cofactor that restricts GATA6 function by inhibiting DNA-binding, resulting in repression of GATA6 transcriptional activation of downstream target genes. Represses GATA6-mediated trans activation of lung- and cardiac tissue-specific promoters. Inhibits DNA-binding by GATA4 and GATA1 to the cTNC promoter (By similarity). Plays a critical role in the development of cardiac hypertrophy via activation of calcineurin/nuclear factor of activated T-cells signaling pathway.</text>
</comment>
<comment type="subunit">
    <text evidence="1 5">Interacts with GATA1 and GATA4 (By similarity). Interacts with beta-dystroglycan. Interacts with GATA6.</text>
</comment>
<comment type="interaction">
    <interactant intactId="EBI-5774016">
        <id>Q9NZU5</id>
    </interactant>
    <interactant intactId="EBI-713992">
        <id>P47224</id>
        <label>RABIF</label>
    </interactant>
    <organismsDiffer>false</organismsDiffer>
    <experiments>3</experiments>
</comment>
<comment type="interaction">
    <interactant intactId="EBI-5774016">
        <id>Q9NZU5</id>
    </interactant>
    <interactant intactId="EBI-750487">
        <id>Q8WW24</id>
        <label>TEKT4</label>
    </interactant>
    <organismsDiffer>false</organismsDiffer>
    <experiments>3</experiments>
</comment>
<comment type="subcellular location">
    <subcellularLocation>
        <location evidence="1">Cytoplasm</location>
    </subcellularLocation>
    <subcellularLocation>
        <location evidence="1">Nucleus</location>
    </subcellularLocation>
    <text evidence="1">May shuttle between the cytoplasm and the nucleus.</text>
</comment>
<comment type="alternative products">
    <event type="alternative splicing"/>
    <isoform>
        <id>Q9NZU5-1</id>
        <name>1</name>
        <sequence type="displayed"/>
    </isoform>
    <isoform>
        <id>Q9NZU5-2</id>
        <name>2</name>
        <sequence type="described" ref="VSP_053895"/>
    </isoform>
</comment>
<comment type="tissue specificity">
    <text evidence="6">Expressed in the heart (at protein level). Expressed in many tissues with highest abundance in skeletal muscle.</text>
</comment>
<comment type="domain">
    <text evidence="1">The LIM zinc-binding domains and the Cys-rich region mediate interaction with GATA6.</text>
</comment>
<reference key="1">
    <citation type="journal article" date="2000" name="Genomics">
        <title>Identification of a novel LIM domain gene, LMCD1, and chromosomal localization in human and mouse.</title>
        <authorList>
            <person name="Bespalova I.N."/>
            <person name="Burmeister M."/>
        </authorList>
    </citation>
    <scope>NUCLEOTIDE SEQUENCE [MRNA] (ISOFORM 1)</scope>
</reference>
<reference key="2">
    <citation type="submission" date="1999-12" db="EMBL/GenBank/DDBJ databases">
        <title>Identification of Dyxin: a novel intracellular binding partner of beta-dystroglycan.</title>
        <authorList>
            <person name="Holt H.H."/>
            <person name="Crosbie R.H."/>
            <person name="Saito F."/>
            <person name="Campbell K.P."/>
        </authorList>
    </citation>
    <scope>NUCLEOTIDE SEQUENCE [MRNA] (ISOFORM 1)</scope>
</reference>
<reference key="3">
    <citation type="journal article" date="2004" name="Nat. Genet.">
        <title>Complete sequencing and characterization of 21,243 full-length human cDNAs.</title>
        <authorList>
            <person name="Ota T."/>
            <person name="Suzuki Y."/>
            <person name="Nishikawa T."/>
            <person name="Otsuki T."/>
            <person name="Sugiyama T."/>
            <person name="Irie R."/>
            <person name="Wakamatsu A."/>
            <person name="Hayashi K."/>
            <person name="Sato H."/>
            <person name="Nagai K."/>
            <person name="Kimura K."/>
            <person name="Makita H."/>
            <person name="Sekine M."/>
            <person name="Obayashi M."/>
            <person name="Nishi T."/>
            <person name="Shibahara T."/>
            <person name="Tanaka T."/>
            <person name="Ishii S."/>
            <person name="Yamamoto J."/>
            <person name="Saito K."/>
            <person name="Kawai Y."/>
            <person name="Isono Y."/>
            <person name="Nakamura Y."/>
            <person name="Nagahari K."/>
            <person name="Murakami K."/>
            <person name="Yasuda T."/>
            <person name="Iwayanagi T."/>
            <person name="Wagatsuma M."/>
            <person name="Shiratori A."/>
            <person name="Sudo H."/>
            <person name="Hosoiri T."/>
            <person name="Kaku Y."/>
            <person name="Kodaira H."/>
            <person name="Kondo H."/>
            <person name="Sugawara M."/>
            <person name="Takahashi M."/>
            <person name="Kanda K."/>
            <person name="Yokoi T."/>
            <person name="Furuya T."/>
            <person name="Kikkawa E."/>
            <person name="Omura Y."/>
            <person name="Abe K."/>
            <person name="Kamihara K."/>
            <person name="Katsuta N."/>
            <person name="Sato K."/>
            <person name="Tanikawa M."/>
            <person name="Yamazaki M."/>
            <person name="Ninomiya K."/>
            <person name="Ishibashi T."/>
            <person name="Yamashita H."/>
            <person name="Murakawa K."/>
            <person name="Fujimori K."/>
            <person name="Tanai H."/>
            <person name="Kimata M."/>
            <person name="Watanabe M."/>
            <person name="Hiraoka S."/>
            <person name="Chiba Y."/>
            <person name="Ishida S."/>
            <person name="Ono Y."/>
            <person name="Takiguchi S."/>
            <person name="Watanabe S."/>
            <person name="Yosida M."/>
            <person name="Hotuta T."/>
            <person name="Kusano J."/>
            <person name="Kanehori K."/>
            <person name="Takahashi-Fujii A."/>
            <person name="Hara H."/>
            <person name="Tanase T.-O."/>
            <person name="Nomura Y."/>
            <person name="Togiya S."/>
            <person name="Komai F."/>
            <person name="Hara R."/>
            <person name="Takeuchi K."/>
            <person name="Arita M."/>
            <person name="Imose N."/>
            <person name="Musashino K."/>
            <person name="Yuuki H."/>
            <person name="Oshima A."/>
            <person name="Sasaki N."/>
            <person name="Aotsuka S."/>
            <person name="Yoshikawa Y."/>
            <person name="Matsunawa H."/>
            <person name="Ichihara T."/>
            <person name="Shiohata N."/>
            <person name="Sano S."/>
            <person name="Moriya S."/>
            <person name="Momiyama H."/>
            <person name="Satoh N."/>
            <person name="Takami S."/>
            <person name="Terashima Y."/>
            <person name="Suzuki O."/>
            <person name="Nakagawa S."/>
            <person name="Senoh A."/>
            <person name="Mizoguchi H."/>
            <person name="Goto Y."/>
            <person name="Shimizu F."/>
            <person name="Wakebe H."/>
            <person name="Hishigaki H."/>
            <person name="Watanabe T."/>
            <person name="Sugiyama A."/>
            <person name="Takemoto M."/>
            <person name="Kawakami B."/>
            <person name="Yamazaki M."/>
            <person name="Watanabe K."/>
            <person name="Kumagai A."/>
            <person name="Itakura S."/>
            <person name="Fukuzumi Y."/>
            <person name="Fujimori Y."/>
            <person name="Komiyama M."/>
            <person name="Tashiro H."/>
            <person name="Tanigami A."/>
            <person name="Fujiwara T."/>
            <person name="Ono T."/>
            <person name="Yamada K."/>
            <person name="Fujii Y."/>
            <person name="Ozaki K."/>
            <person name="Hirao M."/>
            <person name="Ohmori Y."/>
            <person name="Kawabata A."/>
            <person name="Hikiji T."/>
            <person name="Kobatake N."/>
            <person name="Inagaki H."/>
            <person name="Ikema Y."/>
            <person name="Okamoto S."/>
            <person name="Okitani R."/>
            <person name="Kawakami T."/>
            <person name="Noguchi S."/>
            <person name="Itoh T."/>
            <person name="Shigeta K."/>
            <person name="Senba T."/>
            <person name="Matsumura K."/>
            <person name="Nakajima Y."/>
            <person name="Mizuno T."/>
            <person name="Morinaga M."/>
            <person name="Sasaki M."/>
            <person name="Togashi T."/>
            <person name="Oyama M."/>
            <person name="Hata H."/>
            <person name="Watanabe M."/>
            <person name="Komatsu T."/>
            <person name="Mizushima-Sugano J."/>
            <person name="Satoh T."/>
            <person name="Shirai Y."/>
            <person name="Takahashi Y."/>
            <person name="Nakagawa K."/>
            <person name="Okumura K."/>
            <person name="Nagase T."/>
            <person name="Nomura N."/>
            <person name="Kikuchi H."/>
            <person name="Masuho Y."/>
            <person name="Yamashita R."/>
            <person name="Nakai K."/>
            <person name="Yada T."/>
            <person name="Nakamura Y."/>
            <person name="Ohara O."/>
            <person name="Isogai T."/>
            <person name="Sugano S."/>
        </authorList>
    </citation>
    <scope>NUCLEOTIDE SEQUENCE [LARGE SCALE MRNA] (ISOFORMS 1 AND 2)</scope>
    <source>
        <tissue>Amygdala</tissue>
        <tissue>Mammary gland</tissue>
    </source>
</reference>
<reference key="4">
    <citation type="journal article" date="2006" name="Nature">
        <title>The DNA sequence, annotation and analysis of human chromosome 3.</title>
        <authorList>
            <person name="Muzny D.M."/>
            <person name="Scherer S.E."/>
            <person name="Kaul R."/>
            <person name="Wang J."/>
            <person name="Yu J."/>
            <person name="Sudbrak R."/>
            <person name="Buhay C.J."/>
            <person name="Chen R."/>
            <person name="Cree A."/>
            <person name="Ding Y."/>
            <person name="Dugan-Rocha S."/>
            <person name="Gill R."/>
            <person name="Gunaratne P."/>
            <person name="Harris R.A."/>
            <person name="Hawes A.C."/>
            <person name="Hernandez J."/>
            <person name="Hodgson A.V."/>
            <person name="Hume J."/>
            <person name="Jackson A."/>
            <person name="Khan Z.M."/>
            <person name="Kovar-Smith C."/>
            <person name="Lewis L.R."/>
            <person name="Lozado R.J."/>
            <person name="Metzker M.L."/>
            <person name="Milosavljevic A."/>
            <person name="Miner G.R."/>
            <person name="Morgan M.B."/>
            <person name="Nazareth L.V."/>
            <person name="Scott G."/>
            <person name="Sodergren E."/>
            <person name="Song X.-Z."/>
            <person name="Steffen D."/>
            <person name="Wei S."/>
            <person name="Wheeler D.A."/>
            <person name="Wright M.W."/>
            <person name="Worley K.C."/>
            <person name="Yuan Y."/>
            <person name="Zhang Z."/>
            <person name="Adams C.Q."/>
            <person name="Ansari-Lari M.A."/>
            <person name="Ayele M."/>
            <person name="Brown M.J."/>
            <person name="Chen G."/>
            <person name="Chen Z."/>
            <person name="Clendenning J."/>
            <person name="Clerc-Blankenburg K.P."/>
            <person name="Chen R."/>
            <person name="Chen Z."/>
            <person name="Davis C."/>
            <person name="Delgado O."/>
            <person name="Dinh H.H."/>
            <person name="Dong W."/>
            <person name="Draper H."/>
            <person name="Ernst S."/>
            <person name="Fu G."/>
            <person name="Gonzalez-Garay M.L."/>
            <person name="Garcia D.K."/>
            <person name="Gillett W."/>
            <person name="Gu J."/>
            <person name="Hao B."/>
            <person name="Haugen E."/>
            <person name="Havlak P."/>
            <person name="He X."/>
            <person name="Hennig S."/>
            <person name="Hu S."/>
            <person name="Huang W."/>
            <person name="Jackson L.R."/>
            <person name="Jacob L.S."/>
            <person name="Kelly S.H."/>
            <person name="Kube M."/>
            <person name="Levy R."/>
            <person name="Li Z."/>
            <person name="Liu B."/>
            <person name="Liu J."/>
            <person name="Liu W."/>
            <person name="Lu J."/>
            <person name="Maheshwari M."/>
            <person name="Nguyen B.-V."/>
            <person name="Okwuonu G.O."/>
            <person name="Palmeiri A."/>
            <person name="Pasternak S."/>
            <person name="Perez L.M."/>
            <person name="Phelps K.A."/>
            <person name="Plopper F.J."/>
            <person name="Qiang B."/>
            <person name="Raymond C."/>
            <person name="Rodriguez R."/>
            <person name="Saenphimmachak C."/>
            <person name="Santibanez J."/>
            <person name="Shen H."/>
            <person name="Shen Y."/>
            <person name="Subramanian S."/>
            <person name="Tabor P.E."/>
            <person name="Verduzco D."/>
            <person name="Waldron L."/>
            <person name="Wang J."/>
            <person name="Wang J."/>
            <person name="Wang Q."/>
            <person name="Williams G.A."/>
            <person name="Wong G.K.-S."/>
            <person name="Yao Z."/>
            <person name="Zhang J."/>
            <person name="Zhang X."/>
            <person name="Zhao G."/>
            <person name="Zhou J."/>
            <person name="Zhou Y."/>
            <person name="Nelson D."/>
            <person name="Lehrach H."/>
            <person name="Reinhardt R."/>
            <person name="Naylor S.L."/>
            <person name="Yang H."/>
            <person name="Olson M."/>
            <person name="Weinstock G."/>
            <person name="Gibbs R.A."/>
        </authorList>
    </citation>
    <scope>NUCLEOTIDE SEQUENCE [LARGE SCALE GENOMIC DNA]</scope>
</reference>
<reference key="5">
    <citation type="journal article" date="2004" name="Genome Res.">
        <title>The status, quality, and expansion of the NIH full-length cDNA project: the Mammalian Gene Collection (MGC).</title>
        <authorList>
            <consortium name="The MGC Project Team"/>
        </authorList>
    </citation>
    <scope>NUCLEOTIDE SEQUENCE [LARGE SCALE MRNA] (ISOFORM 1)</scope>
    <source>
        <tissue>Eye</tissue>
    </source>
</reference>
<reference key="6">
    <citation type="journal article" date="2005" name="Mol. Cell. Biol.">
        <title>LMCD1/Dyxin is a novel transcriptional cofactor that restricts GATA6 function by inhibiting DNA binding.</title>
        <authorList>
            <person name="Rath N."/>
            <person name="Wang Z."/>
            <person name="Lu M.M."/>
            <person name="Morrisey E.E."/>
        </authorList>
    </citation>
    <scope>INTERACTION WITH GATA6</scope>
</reference>
<reference key="7">
    <citation type="journal article" date="2010" name="Hypertension">
        <title>LIM and cysteine-rich domains 1 regulates cardiac hypertrophy by targeting calcineurin/nuclear factor of activated T cells signaling.</title>
        <authorList>
            <person name="Bian Z.Y."/>
            <person name="Huang H."/>
            <person name="Jiang H."/>
            <person name="Shen D.F."/>
            <person name="Yan L."/>
            <person name="Zhu L.H."/>
            <person name="Wang L."/>
            <person name="Cao F."/>
            <person name="Liu C."/>
            <person name="Tang Q.Z."/>
            <person name="Li H."/>
        </authorList>
    </citation>
    <scope>FUNCTION</scope>
    <scope>TISSUE SPECIFICITY</scope>
</reference>
<reference key="8">
    <citation type="journal article" date="2014" name="J. Proteomics">
        <title>An enzyme assisted RP-RPLC approach for in-depth analysis of human liver phosphoproteome.</title>
        <authorList>
            <person name="Bian Y."/>
            <person name="Song C."/>
            <person name="Cheng K."/>
            <person name="Dong M."/>
            <person name="Wang F."/>
            <person name="Huang J."/>
            <person name="Sun D."/>
            <person name="Wang L."/>
            <person name="Ye M."/>
            <person name="Zou H."/>
        </authorList>
    </citation>
    <scope>PHOSPHORYLATION [LARGE SCALE ANALYSIS] AT SER-16</scope>
    <scope>IDENTIFICATION BY MASS SPECTROMETRY [LARGE SCALE ANALYSIS]</scope>
    <source>
        <tissue>Liver</tissue>
    </source>
</reference>
<evidence type="ECO:0000250" key="1"/>
<evidence type="ECO:0000255" key="2">
    <source>
        <dbReference type="PROSITE-ProRule" id="PRU00125"/>
    </source>
</evidence>
<evidence type="ECO:0000255" key="3">
    <source>
        <dbReference type="PROSITE-ProRule" id="PRU00636"/>
    </source>
</evidence>
<evidence type="ECO:0000256" key="4">
    <source>
        <dbReference type="SAM" id="MobiDB-lite"/>
    </source>
</evidence>
<evidence type="ECO:0000269" key="5">
    <source>
    </source>
</evidence>
<evidence type="ECO:0000269" key="6">
    <source>
    </source>
</evidence>
<evidence type="ECO:0000303" key="7">
    <source>
    </source>
</evidence>
<evidence type="ECO:0007744" key="8">
    <source>
    </source>
</evidence>
<gene>
    <name type="primary">LMCD1</name>
</gene>
<protein>
    <recommendedName>
        <fullName>LIM and cysteine-rich domains protein 1</fullName>
    </recommendedName>
    <alternativeName>
        <fullName>Dyxin</fullName>
    </alternativeName>
</protein>
<dbReference type="EMBL" id="AF169284">
    <property type="protein sequence ID" value="AAF34411.1"/>
    <property type="molecule type" value="mRNA"/>
</dbReference>
<dbReference type="EMBL" id="AF216709">
    <property type="protein sequence ID" value="AAG36778.1"/>
    <property type="molecule type" value="mRNA"/>
</dbReference>
<dbReference type="EMBL" id="AK022176">
    <property type="protein sequence ID" value="BAB13976.1"/>
    <property type="molecule type" value="mRNA"/>
</dbReference>
<dbReference type="EMBL" id="AK294455">
    <property type="protein sequence ID" value="BAG57691.1"/>
    <property type="molecule type" value="mRNA"/>
</dbReference>
<dbReference type="EMBL" id="AC087859">
    <property type="status" value="NOT_ANNOTATED_CDS"/>
    <property type="molecule type" value="Genomic_DNA"/>
</dbReference>
<dbReference type="EMBL" id="BC000646">
    <property type="protein sequence ID" value="AAH00646.1"/>
    <property type="molecule type" value="mRNA"/>
</dbReference>
<dbReference type="CCDS" id="CCDS33688.1">
    <molecule id="Q9NZU5-1"/>
</dbReference>
<dbReference type="CCDS" id="CCDS63534.1">
    <molecule id="Q9NZU5-2"/>
</dbReference>
<dbReference type="RefSeq" id="NP_001265162.1">
    <molecule id="Q9NZU5-2"/>
    <property type="nucleotide sequence ID" value="NM_001278233.2"/>
</dbReference>
<dbReference type="RefSeq" id="NP_001265163.1">
    <property type="nucleotide sequence ID" value="NM_001278234.1"/>
</dbReference>
<dbReference type="RefSeq" id="NP_001265164.1">
    <property type="nucleotide sequence ID" value="NM_001278235.1"/>
</dbReference>
<dbReference type="RefSeq" id="NP_055398.1">
    <molecule id="Q9NZU5-1"/>
    <property type="nucleotide sequence ID" value="NM_014583.4"/>
</dbReference>
<dbReference type="SMR" id="Q9NZU5"/>
<dbReference type="BioGRID" id="119020">
    <property type="interactions" value="22"/>
</dbReference>
<dbReference type="FunCoup" id="Q9NZU5">
    <property type="interactions" value="1727"/>
</dbReference>
<dbReference type="IntAct" id="Q9NZU5">
    <property type="interactions" value="10"/>
</dbReference>
<dbReference type="MINT" id="Q9NZU5"/>
<dbReference type="STRING" id="9606.ENSP00000157600"/>
<dbReference type="GlyGen" id="Q9NZU5">
    <property type="glycosylation" value="1 site, 1 O-linked glycan (1 site)"/>
</dbReference>
<dbReference type="iPTMnet" id="Q9NZU5"/>
<dbReference type="MetOSite" id="Q9NZU5"/>
<dbReference type="PhosphoSitePlus" id="Q9NZU5"/>
<dbReference type="BioMuta" id="LMCD1"/>
<dbReference type="DMDM" id="20978521"/>
<dbReference type="jPOST" id="Q9NZU5"/>
<dbReference type="MassIVE" id="Q9NZU5"/>
<dbReference type="PaxDb" id="9606-ENSP00000157600"/>
<dbReference type="PeptideAtlas" id="Q9NZU5"/>
<dbReference type="ProteomicsDB" id="4113"/>
<dbReference type="ProteomicsDB" id="83511">
    <molecule id="Q9NZU5-1"/>
</dbReference>
<dbReference type="Pumba" id="Q9NZU5"/>
<dbReference type="Antibodypedia" id="10100">
    <property type="antibodies" value="157 antibodies from 18 providers"/>
</dbReference>
<dbReference type="DNASU" id="29995"/>
<dbReference type="Ensembl" id="ENST00000157600.8">
    <molecule id="Q9NZU5-1"/>
    <property type="protein sequence ID" value="ENSP00000157600.3"/>
    <property type="gene ID" value="ENSG00000071282.12"/>
</dbReference>
<dbReference type="Ensembl" id="ENST00000454244.4">
    <molecule id="Q9NZU5-2"/>
    <property type="protein sequence ID" value="ENSP00000396515.1"/>
    <property type="gene ID" value="ENSG00000071282.12"/>
</dbReference>
<dbReference type="GeneID" id="29995"/>
<dbReference type="KEGG" id="hsa:29995"/>
<dbReference type="MANE-Select" id="ENST00000157600.8">
    <property type="protein sequence ID" value="ENSP00000157600.3"/>
    <property type="RefSeq nucleotide sequence ID" value="NM_014583.4"/>
    <property type="RefSeq protein sequence ID" value="NP_055398.1"/>
</dbReference>
<dbReference type="UCSC" id="uc010hci.4">
    <molecule id="Q9NZU5-1"/>
    <property type="organism name" value="human"/>
</dbReference>
<dbReference type="AGR" id="HGNC:6633"/>
<dbReference type="CTD" id="29995"/>
<dbReference type="DisGeNET" id="29995"/>
<dbReference type="GeneCards" id="LMCD1"/>
<dbReference type="HGNC" id="HGNC:6633">
    <property type="gene designation" value="LMCD1"/>
</dbReference>
<dbReference type="HPA" id="ENSG00000071282">
    <property type="expression patterns" value="Tissue enhanced (skeletal)"/>
</dbReference>
<dbReference type="MIM" id="604859">
    <property type="type" value="gene"/>
</dbReference>
<dbReference type="neXtProt" id="NX_Q9NZU5"/>
<dbReference type="OpenTargets" id="ENSG00000071282"/>
<dbReference type="PharmGKB" id="PA30401"/>
<dbReference type="VEuPathDB" id="HostDB:ENSG00000071282"/>
<dbReference type="eggNOG" id="KOG1704">
    <property type="taxonomic scope" value="Eukaryota"/>
</dbReference>
<dbReference type="GeneTree" id="ENSGT00940000158813"/>
<dbReference type="HOGENOM" id="CLU_008937_1_0_1"/>
<dbReference type="InParanoid" id="Q9NZU5"/>
<dbReference type="OMA" id="HDALWHP"/>
<dbReference type="OrthoDB" id="10069167at2759"/>
<dbReference type="PAN-GO" id="Q9NZU5">
    <property type="GO annotations" value="2 GO annotations based on evolutionary models"/>
</dbReference>
<dbReference type="PhylomeDB" id="Q9NZU5"/>
<dbReference type="TreeFam" id="TF313265"/>
<dbReference type="PathwayCommons" id="Q9NZU5"/>
<dbReference type="Reactome" id="R-HSA-5683826">
    <property type="pathway name" value="Surfactant metabolism"/>
</dbReference>
<dbReference type="SignaLink" id="Q9NZU5"/>
<dbReference type="BioGRID-ORCS" id="29995">
    <property type="hits" value="10 hits in 1152 CRISPR screens"/>
</dbReference>
<dbReference type="ChiTaRS" id="LMCD1">
    <property type="organism name" value="human"/>
</dbReference>
<dbReference type="GenomeRNAi" id="29995"/>
<dbReference type="Pharos" id="Q9NZU5">
    <property type="development level" value="Tbio"/>
</dbReference>
<dbReference type="PRO" id="PR:Q9NZU5"/>
<dbReference type="Proteomes" id="UP000005640">
    <property type="component" value="Chromosome 3"/>
</dbReference>
<dbReference type="RNAct" id="Q9NZU5">
    <property type="molecule type" value="protein"/>
</dbReference>
<dbReference type="Bgee" id="ENSG00000071282">
    <property type="expression patterns" value="Expressed in hindlimb stylopod muscle and 175 other cell types or tissues"/>
</dbReference>
<dbReference type="ExpressionAtlas" id="Q9NZU5">
    <property type="expression patterns" value="baseline and differential"/>
</dbReference>
<dbReference type="GO" id="GO:0005737">
    <property type="term" value="C:cytoplasm"/>
    <property type="evidence" value="ECO:0007669"/>
    <property type="project" value="UniProtKB-SubCell"/>
</dbReference>
<dbReference type="GO" id="GO:0005654">
    <property type="term" value="C:nucleoplasm"/>
    <property type="evidence" value="ECO:0000304"/>
    <property type="project" value="Reactome"/>
</dbReference>
<dbReference type="GO" id="GO:0005634">
    <property type="term" value="C:nucleus"/>
    <property type="evidence" value="ECO:0000318"/>
    <property type="project" value="GO_Central"/>
</dbReference>
<dbReference type="GO" id="GO:0003714">
    <property type="term" value="F:transcription corepressor activity"/>
    <property type="evidence" value="ECO:0000250"/>
    <property type="project" value="UniProtKB"/>
</dbReference>
<dbReference type="GO" id="GO:0008270">
    <property type="term" value="F:zinc ion binding"/>
    <property type="evidence" value="ECO:0007669"/>
    <property type="project" value="InterPro"/>
</dbReference>
<dbReference type="GO" id="GO:0000122">
    <property type="term" value="P:negative regulation of transcription by RNA polymerase II"/>
    <property type="evidence" value="ECO:0007669"/>
    <property type="project" value="Ensembl"/>
</dbReference>
<dbReference type="GO" id="GO:0070886">
    <property type="term" value="P:positive regulation of calcineurin-NFAT signaling cascade"/>
    <property type="evidence" value="ECO:0000315"/>
    <property type="project" value="UniProtKB"/>
</dbReference>
<dbReference type="GO" id="GO:0010611">
    <property type="term" value="P:regulation of cardiac muscle hypertrophy"/>
    <property type="evidence" value="ECO:0000315"/>
    <property type="project" value="UniProtKB"/>
</dbReference>
<dbReference type="CDD" id="cd09340">
    <property type="entry name" value="LIM1_Testin_like"/>
    <property type="match status" value="1"/>
</dbReference>
<dbReference type="CDD" id="cd09829">
    <property type="entry name" value="PET_testin"/>
    <property type="match status" value="1"/>
</dbReference>
<dbReference type="FunFam" id="2.10.110.10:FF:000079">
    <property type="entry name" value="LIM and cysteine-rich domains protein 1"/>
    <property type="match status" value="1"/>
</dbReference>
<dbReference type="FunFam" id="2.10.110.10:FF:000005">
    <property type="entry name" value="Testin isoform 1"/>
    <property type="match status" value="1"/>
</dbReference>
<dbReference type="Gene3D" id="2.10.110.10">
    <property type="entry name" value="Cysteine Rich Protein"/>
    <property type="match status" value="2"/>
</dbReference>
<dbReference type="InterPro" id="IPR010442">
    <property type="entry name" value="PET_domain"/>
</dbReference>
<dbReference type="InterPro" id="IPR033724">
    <property type="entry name" value="PET_testin"/>
</dbReference>
<dbReference type="InterPro" id="IPR047120">
    <property type="entry name" value="Pk/Esn/Tes"/>
</dbReference>
<dbReference type="InterPro" id="IPR001781">
    <property type="entry name" value="Znf_LIM"/>
</dbReference>
<dbReference type="PANTHER" id="PTHR24211:SF0">
    <property type="entry name" value="LIM AND CYSTEINE-RICH DOMAINS PROTEIN 1"/>
    <property type="match status" value="1"/>
</dbReference>
<dbReference type="PANTHER" id="PTHR24211">
    <property type="entry name" value="LIM DOMAIN-CONTAINING PROTEIN"/>
    <property type="match status" value="1"/>
</dbReference>
<dbReference type="Pfam" id="PF00412">
    <property type="entry name" value="LIM"/>
    <property type="match status" value="2"/>
</dbReference>
<dbReference type="Pfam" id="PF06297">
    <property type="entry name" value="PET"/>
    <property type="match status" value="1"/>
</dbReference>
<dbReference type="SMART" id="SM00132">
    <property type="entry name" value="LIM"/>
    <property type="match status" value="2"/>
</dbReference>
<dbReference type="SUPFAM" id="SSF57716">
    <property type="entry name" value="Glucocorticoid receptor-like (DNA-binding domain)"/>
    <property type="match status" value="1"/>
</dbReference>
<dbReference type="PROSITE" id="PS00478">
    <property type="entry name" value="LIM_DOMAIN_1"/>
    <property type="match status" value="2"/>
</dbReference>
<dbReference type="PROSITE" id="PS50023">
    <property type="entry name" value="LIM_DOMAIN_2"/>
    <property type="match status" value="2"/>
</dbReference>
<dbReference type="PROSITE" id="PS51303">
    <property type="entry name" value="PET"/>
    <property type="match status" value="1"/>
</dbReference>
<organism>
    <name type="scientific">Homo sapiens</name>
    <name type="common">Human</name>
    <dbReference type="NCBI Taxonomy" id="9606"/>
    <lineage>
        <taxon>Eukaryota</taxon>
        <taxon>Metazoa</taxon>
        <taxon>Chordata</taxon>
        <taxon>Craniata</taxon>
        <taxon>Vertebrata</taxon>
        <taxon>Euteleostomi</taxon>
        <taxon>Mammalia</taxon>
        <taxon>Eutheria</taxon>
        <taxon>Euarchontoglires</taxon>
        <taxon>Primates</taxon>
        <taxon>Haplorrhini</taxon>
        <taxon>Catarrhini</taxon>
        <taxon>Hominidae</taxon>
        <taxon>Homo</taxon>
    </lineage>
</organism>
<proteinExistence type="evidence at protein level"/>
<keyword id="KW-0025">Alternative splicing</keyword>
<keyword id="KW-0963">Cytoplasm</keyword>
<keyword id="KW-0440">LIM domain</keyword>
<keyword id="KW-0479">Metal-binding</keyword>
<keyword id="KW-0539">Nucleus</keyword>
<keyword id="KW-0597">Phosphoprotein</keyword>
<keyword id="KW-1267">Proteomics identification</keyword>
<keyword id="KW-1185">Reference proteome</keyword>
<keyword id="KW-0677">Repeat</keyword>
<keyword id="KW-0678">Repressor</keyword>
<keyword id="KW-0804">Transcription</keyword>
<keyword id="KW-0805">Transcription regulation</keyword>
<keyword id="KW-0862">Zinc</keyword>
<feature type="chain" id="PRO_0000075815" description="LIM and cysteine-rich domains protein 1">
    <location>
        <begin position="1"/>
        <end position="365"/>
    </location>
</feature>
<feature type="domain" description="PET" evidence="3">
    <location>
        <begin position="99"/>
        <end position="206"/>
    </location>
</feature>
<feature type="domain" description="LIM zinc-binding 1" evidence="2">
    <location>
        <begin position="241"/>
        <end position="306"/>
    </location>
</feature>
<feature type="domain" description="LIM zinc-binding 2" evidence="2">
    <location>
        <begin position="307"/>
        <end position="365"/>
    </location>
</feature>
<feature type="region of interest" description="Disordered" evidence="4">
    <location>
        <begin position="200"/>
        <end position="235"/>
    </location>
</feature>
<feature type="compositionally biased region" description="Basic and acidic residues" evidence="4">
    <location>
        <begin position="208"/>
        <end position="220"/>
    </location>
</feature>
<feature type="modified residue" description="Phosphoserine" evidence="8">
    <location>
        <position position="16"/>
    </location>
</feature>
<feature type="splice variant" id="VSP_053895" description="In isoform 2." evidence="7">
    <location>
        <begin position="1"/>
        <end position="73"/>
    </location>
</feature>
<name>LMCD1_HUMAN</name>
<sequence length="365" mass="40833">MAKVAKDLNPGVKKMSLGQLQSARGVACLGCKGTCSGFEPHSWRKICKSCKCSQEDHCLTSDLEDDRKIGRLLMDSKYSTLTARVKGGDGIRIYKRNRMIMTNPIATGKDPTFDTITYEWAPPGVTQKLGLQYMELIPKEKQPVTGTEGAFYRRRQLMHQLPIYDQDPSRCRGLLENELKLMEEFVKQYKSEALGVGEVALPGQGGLPKEEGKQQEKPEGAETTAATTNGSLSDPSKEVEYVCELCKGAAPPDSPVVYSDRAGYNKQWHPTCFVCAKCSEPLVDLIYFWKDGAPWCGRHYCESLRPRCSGCDEIIFAEDYQRVEDLAWHRKHFVCEGCEQLLSGRAYIVTKGQLLCPTCSKSKRS</sequence>
<accession>Q9NZU5</accession>
<accession>B4DG80</accession>